<gene>
    <name evidence="1" type="primary">rps19</name>
    <name type="ordered locus">MM_2128</name>
</gene>
<name>RS19_METMA</name>
<evidence type="ECO:0000255" key="1">
    <source>
        <dbReference type="HAMAP-Rule" id="MF_00531"/>
    </source>
</evidence>
<evidence type="ECO:0000305" key="2"/>
<dbReference type="EMBL" id="AE008384">
    <property type="protein sequence ID" value="AAM31824.1"/>
    <property type="molecule type" value="Genomic_DNA"/>
</dbReference>
<dbReference type="RefSeq" id="WP_011034059.1">
    <property type="nucleotide sequence ID" value="NC_003901.1"/>
</dbReference>
<dbReference type="SMR" id="Q8PV46"/>
<dbReference type="KEGG" id="mma:MM_2128"/>
<dbReference type="PATRIC" id="fig|192952.21.peg.2442"/>
<dbReference type="eggNOG" id="arCOG04099">
    <property type="taxonomic scope" value="Archaea"/>
</dbReference>
<dbReference type="HOGENOM" id="CLU_097347_1_1_2"/>
<dbReference type="Proteomes" id="UP000000595">
    <property type="component" value="Chromosome"/>
</dbReference>
<dbReference type="GO" id="GO:0022627">
    <property type="term" value="C:cytosolic small ribosomal subunit"/>
    <property type="evidence" value="ECO:0007669"/>
    <property type="project" value="TreeGrafter"/>
</dbReference>
<dbReference type="GO" id="GO:0019843">
    <property type="term" value="F:rRNA binding"/>
    <property type="evidence" value="ECO:0007669"/>
    <property type="project" value="UniProtKB-UniRule"/>
</dbReference>
<dbReference type="GO" id="GO:0003735">
    <property type="term" value="F:structural constituent of ribosome"/>
    <property type="evidence" value="ECO:0007669"/>
    <property type="project" value="InterPro"/>
</dbReference>
<dbReference type="GO" id="GO:0000028">
    <property type="term" value="P:ribosomal small subunit assembly"/>
    <property type="evidence" value="ECO:0007669"/>
    <property type="project" value="TreeGrafter"/>
</dbReference>
<dbReference type="GO" id="GO:0006412">
    <property type="term" value="P:translation"/>
    <property type="evidence" value="ECO:0007669"/>
    <property type="project" value="UniProtKB-UniRule"/>
</dbReference>
<dbReference type="FunFam" id="3.30.860.10:FF:000002">
    <property type="entry name" value="40S ribosomal protein S15"/>
    <property type="match status" value="1"/>
</dbReference>
<dbReference type="Gene3D" id="3.30.860.10">
    <property type="entry name" value="30s Ribosomal Protein S19, Chain A"/>
    <property type="match status" value="1"/>
</dbReference>
<dbReference type="HAMAP" id="MF_00531">
    <property type="entry name" value="Ribosomal_uS19"/>
    <property type="match status" value="1"/>
</dbReference>
<dbReference type="InterPro" id="IPR002222">
    <property type="entry name" value="Ribosomal_uS19"/>
</dbReference>
<dbReference type="InterPro" id="IPR020934">
    <property type="entry name" value="Ribosomal_uS19_CS"/>
</dbReference>
<dbReference type="InterPro" id="IPR005713">
    <property type="entry name" value="Ribosomal_uS19_euk/arc"/>
</dbReference>
<dbReference type="InterPro" id="IPR023575">
    <property type="entry name" value="Ribosomal_uS19_SF"/>
</dbReference>
<dbReference type="NCBIfam" id="NF003121">
    <property type="entry name" value="PRK04038.1"/>
    <property type="match status" value="1"/>
</dbReference>
<dbReference type="NCBIfam" id="TIGR01025">
    <property type="entry name" value="uS19_arch"/>
    <property type="match status" value="1"/>
</dbReference>
<dbReference type="PANTHER" id="PTHR11880">
    <property type="entry name" value="RIBOSOMAL PROTEIN S19P FAMILY MEMBER"/>
    <property type="match status" value="1"/>
</dbReference>
<dbReference type="PANTHER" id="PTHR11880:SF2">
    <property type="entry name" value="SMALL RIBOSOMAL SUBUNIT PROTEIN US19"/>
    <property type="match status" value="1"/>
</dbReference>
<dbReference type="Pfam" id="PF00203">
    <property type="entry name" value="Ribosomal_S19"/>
    <property type="match status" value="1"/>
</dbReference>
<dbReference type="PIRSF" id="PIRSF002144">
    <property type="entry name" value="Ribosomal_S19"/>
    <property type="match status" value="1"/>
</dbReference>
<dbReference type="PRINTS" id="PR00975">
    <property type="entry name" value="RIBOSOMALS19"/>
</dbReference>
<dbReference type="SUPFAM" id="SSF54570">
    <property type="entry name" value="Ribosomal protein S19"/>
    <property type="match status" value="1"/>
</dbReference>
<dbReference type="PROSITE" id="PS00323">
    <property type="entry name" value="RIBOSOMAL_S19"/>
    <property type="match status" value="1"/>
</dbReference>
<accession>Q8PV46</accession>
<proteinExistence type="inferred from homology"/>
<reference key="1">
    <citation type="journal article" date="2002" name="J. Mol. Microbiol. Biotechnol.">
        <title>The genome of Methanosarcina mazei: evidence for lateral gene transfer between Bacteria and Archaea.</title>
        <authorList>
            <person name="Deppenmeier U."/>
            <person name="Johann A."/>
            <person name="Hartsch T."/>
            <person name="Merkl R."/>
            <person name="Schmitz R.A."/>
            <person name="Martinez-Arias R."/>
            <person name="Henne A."/>
            <person name="Wiezer A."/>
            <person name="Baeumer S."/>
            <person name="Jacobi C."/>
            <person name="Brueggemann H."/>
            <person name="Lienard T."/>
            <person name="Christmann A."/>
            <person name="Boemecke M."/>
            <person name="Steckel S."/>
            <person name="Bhattacharyya A."/>
            <person name="Lykidis A."/>
            <person name="Overbeek R."/>
            <person name="Klenk H.-P."/>
            <person name="Gunsalus R.P."/>
            <person name="Fritz H.-J."/>
            <person name="Gottschalk G."/>
        </authorList>
    </citation>
    <scope>NUCLEOTIDE SEQUENCE [LARGE SCALE GENOMIC DNA]</scope>
    <source>
        <strain>ATCC BAA-159 / DSM 3647 / Goe1 / Go1 / JCM 11833 / OCM 88</strain>
    </source>
</reference>
<comment type="function">
    <text evidence="1">Protein S19 forms a complex with S13 that binds strongly to the 16S ribosomal RNA.</text>
</comment>
<comment type="similarity">
    <text evidence="1">Belongs to the universal ribosomal protein uS19 family.</text>
</comment>
<organism>
    <name type="scientific">Methanosarcina mazei (strain ATCC BAA-159 / DSM 3647 / Goe1 / Go1 / JCM 11833 / OCM 88)</name>
    <name type="common">Methanosarcina frisia</name>
    <dbReference type="NCBI Taxonomy" id="192952"/>
    <lineage>
        <taxon>Archaea</taxon>
        <taxon>Methanobacteriati</taxon>
        <taxon>Methanobacteriota</taxon>
        <taxon>Stenosarchaea group</taxon>
        <taxon>Methanomicrobia</taxon>
        <taxon>Methanosarcinales</taxon>
        <taxon>Methanosarcinaceae</taxon>
        <taxon>Methanosarcina</taxon>
    </lineage>
</organism>
<feature type="chain" id="PRO_0000130004" description="Small ribosomal subunit protein uS19">
    <location>
        <begin position="1"/>
        <end position="136"/>
    </location>
</feature>
<protein>
    <recommendedName>
        <fullName evidence="1">Small ribosomal subunit protein uS19</fullName>
    </recommendedName>
    <alternativeName>
        <fullName evidence="2">30S ribosomal protein S19</fullName>
    </alternativeName>
</protein>
<keyword id="KW-0687">Ribonucleoprotein</keyword>
<keyword id="KW-0689">Ribosomal protein</keyword>
<keyword id="KW-0694">RNA-binding</keyword>
<keyword id="KW-0699">rRNA-binding</keyword>
<sequence>MAKKSSSRLPKRKGEYTYRGKTVSELQELSLEEFAELLPSRERRSIKRGFTDGQKKVLHEFKEGKKIRTHHRDMIILPEMIGIAIEVHNGKEFVNVELQPEMIGHRFGEFAPTRSRVNHGSAGVGATRSSKFVPLK</sequence>